<evidence type="ECO:0000250" key="1">
    <source>
        <dbReference type="UniProtKB" id="P0AEY5"/>
    </source>
</evidence>
<evidence type="ECO:0000250" key="2">
    <source>
        <dbReference type="UniProtKB" id="P0AEY7"/>
    </source>
</evidence>
<evidence type="ECO:0000305" key="3"/>
<organism>
    <name type="scientific">Haemophilus influenzae (strain ATCC 51907 / DSM 11121 / KW20 / Rd)</name>
    <dbReference type="NCBI Taxonomy" id="71421"/>
    <lineage>
        <taxon>Bacteria</taxon>
        <taxon>Pseudomonadati</taxon>
        <taxon>Pseudomonadota</taxon>
        <taxon>Gammaproteobacteria</taxon>
        <taxon>Pasteurellales</taxon>
        <taxon>Pasteurellaceae</taxon>
        <taxon>Haemophilus</taxon>
    </lineage>
</organism>
<protein>
    <recommendedName>
        <fullName evidence="1">NADPH:quinone oxidoreductase MdaB</fullName>
        <ecNumber evidence="1">1.6.5.10</ecNumber>
    </recommendedName>
    <alternativeName>
        <fullName evidence="1">Modulator of drug activity B</fullName>
    </alternativeName>
</protein>
<reference key="1">
    <citation type="journal article" date="1995" name="Science">
        <title>Whole-genome random sequencing and assembly of Haemophilus influenzae Rd.</title>
        <authorList>
            <person name="Fleischmann R.D."/>
            <person name="Adams M.D."/>
            <person name="White O."/>
            <person name="Clayton R.A."/>
            <person name="Kirkness E.F."/>
            <person name="Kerlavage A.R."/>
            <person name="Bult C.J."/>
            <person name="Tomb J.-F."/>
            <person name="Dougherty B.A."/>
            <person name="Merrick J.M."/>
            <person name="McKenney K."/>
            <person name="Sutton G.G."/>
            <person name="FitzHugh W."/>
            <person name="Fields C.A."/>
            <person name="Gocayne J.D."/>
            <person name="Scott J.D."/>
            <person name="Shirley R."/>
            <person name="Liu L.-I."/>
            <person name="Glodek A."/>
            <person name="Kelley J.M."/>
            <person name="Weidman J.F."/>
            <person name="Phillips C.A."/>
            <person name="Spriggs T."/>
            <person name="Hedblom E."/>
            <person name="Cotton M.D."/>
            <person name="Utterback T.R."/>
            <person name="Hanna M.C."/>
            <person name="Nguyen D.T."/>
            <person name="Saudek D.M."/>
            <person name="Brandon R.C."/>
            <person name="Fine L.D."/>
            <person name="Fritchman J.L."/>
            <person name="Fuhrmann J.L."/>
            <person name="Geoghagen N.S.M."/>
            <person name="Gnehm C.L."/>
            <person name="McDonald L.A."/>
            <person name="Small K.V."/>
            <person name="Fraser C.M."/>
            <person name="Smith H.O."/>
            <person name="Venter J.C."/>
        </authorList>
    </citation>
    <scope>NUCLEOTIDE SEQUENCE [LARGE SCALE GENOMIC DNA]</scope>
    <source>
        <strain>ATCC 51907 / DSM 11121 / KW20 / Rd</strain>
    </source>
</reference>
<comment type="function">
    <text evidence="1">NADPH-specific quinone reductase.</text>
</comment>
<comment type="catalytic activity">
    <reaction evidence="1">
        <text>a quinone + NADPH + H(+) = a quinol + NADP(+)</text>
        <dbReference type="Rhea" id="RHEA:46164"/>
        <dbReference type="ChEBI" id="CHEBI:15378"/>
        <dbReference type="ChEBI" id="CHEBI:24646"/>
        <dbReference type="ChEBI" id="CHEBI:57783"/>
        <dbReference type="ChEBI" id="CHEBI:58349"/>
        <dbReference type="ChEBI" id="CHEBI:132124"/>
        <dbReference type="EC" id="1.6.5.10"/>
    </reaction>
</comment>
<comment type="cofactor">
    <cofactor evidence="1">
        <name>FAD</name>
        <dbReference type="ChEBI" id="CHEBI:57692"/>
    </cofactor>
</comment>
<comment type="subunit">
    <text evidence="2">Homodimer.</text>
</comment>
<comment type="subcellular location">
    <subcellularLocation>
        <location evidence="1">Cytoplasm</location>
    </subcellularLocation>
</comment>
<comment type="similarity">
    <text evidence="3">Belongs to the oxidoreductase MdaB family.</text>
</comment>
<comment type="sequence caution" evidence="3">
    <conflict type="erroneous initiation">
        <sequence resource="EMBL-CDS" id="AAC22308"/>
    </conflict>
    <text>Extended N-terminus.</text>
</comment>
<proteinExistence type="inferred from homology"/>
<name>MDAB_HAEIN</name>
<dbReference type="EC" id="1.6.5.10" evidence="1"/>
<dbReference type="EMBL" id="L42023">
    <property type="protein sequence ID" value="AAC22308.1"/>
    <property type="status" value="ALT_INIT"/>
    <property type="molecule type" value="Genomic_DNA"/>
</dbReference>
<dbReference type="PIR" id="C64084">
    <property type="entry name" value="C64084"/>
</dbReference>
<dbReference type="RefSeq" id="NP_438808.2">
    <property type="nucleotide sequence ID" value="NC_000907.1"/>
</dbReference>
<dbReference type="SMR" id="P44803"/>
<dbReference type="STRING" id="71421.HI_0648"/>
<dbReference type="EnsemblBacteria" id="AAC22308">
    <property type="protein sequence ID" value="AAC22308"/>
    <property type="gene ID" value="HI_0648"/>
</dbReference>
<dbReference type="KEGG" id="hin:HI_0648"/>
<dbReference type="PATRIC" id="fig|71421.8.peg.677"/>
<dbReference type="eggNOG" id="COG2249">
    <property type="taxonomic scope" value="Bacteria"/>
</dbReference>
<dbReference type="HOGENOM" id="CLU_083846_0_0_6"/>
<dbReference type="OrthoDB" id="9798454at2"/>
<dbReference type="PhylomeDB" id="P44803"/>
<dbReference type="BioCyc" id="HINF71421:G1GJ1-683-MONOMER"/>
<dbReference type="Proteomes" id="UP000000579">
    <property type="component" value="Chromosome"/>
</dbReference>
<dbReference type="GO" id="GO:0005737">
    <property type="term" value="C:cytoplasm"/>
    <property type="evidence" value="ECO:0007669"/>
    <property type="project" value="UniProtKB-SubCell"/>
</dbReference>
<dbReference type="GO" id="GO:0008753">
    <property type="term" value="F:NADPH dehydrogenase (quinone) activity"/>
    <property type="evidence" value="ECO:0007669"/>
    <property type="project" value="UniProtKB-EC"/>
</dbReference>
<dbReference type="Gene3D" id="3.40.50.360">
    <property type="match status" value="1"/>
</dbReference>
<dbReference type="InterPro" id="IPR003680">
    <property type="entry name" value="Flavodoxin_fold"/>
</dbReference>
<dbReference type="InterPro" id="IPR029039">
    <property type="entry name" value="Flavoprotein-like_sf"/>
</dbReference>
<dbReference type="InterPro" id="IPR052397">
    <property type="entry name" value="NADPH-QR_MdaB"/>
</dbReference>
<dbReference type="PANTHER" id="PTHR46305">
    <property type="match status" value="1"/>
</dbReference>
<dbReference type="PANTHER" id="PTHR46305:SF3">
    <property type="entry name" value="NADPH:QUINONE OXIDOREDUCTASE MDAB"/>
    <property type="match status" value="1"/>
</dbReference>
<dbReference type="Pfam" id="PF02525">
    <property type="entry name" value="Flavodoxin_2"/>
    <property type="match status" value="1"/>
</dbReference>
<dbReference type="SUPFAM" id="SSF52218">
    <property type="entry name" value="Flavoproteins"/>
    <property type="match status" value="1"/>
</dbReference>
<accession>P44803</accession>
<feature type="chain" id="PRO_0000096315" description="NADPH:quinone oxidoreductase MdaB">
    <location>
        <begin position="1"/>
        <end position="192"/>
    </location>
</feature>
<feature type="binding site" evidence="2">
    <location>
        <begin position="15"/>
        <end position="22"/>
    </location>
    <ligand>
        <name>FAD</name>
        <dbReference type="ChEBI" id="CHEBI:57692"/>
    </ligand>
</feature>
<feature type="binding site" evidence="2">
    <location>
        <begin position="68"/>
        <end position="71"/>
    </location>
    <ligand>
        <name>FAD</name>
        <dbReference type="ChEBI" id="CHEBI:57692"/>
    </ligand>
</feature>
<feature type="binding site" evidence="2">
    <location>
        <position position="107"/>
    </location>
    <ligand>
        <name>FAD</name>
        <dbReference type="ChEBI" id="CHEBI:57692"/>
    </ligand>
</feature>
<feature type="binding site" evidence="2">
    <location>
        <begin position="123"/>
        <end position="126"/>
    </location>
    <ligand>
        <name>FAD</name>
        <dbReference type="ChEBI" id="CHEBI:57692"/>
    </ligand>
</feature>
<gene>
    <name type="primary">mdaB</name>
    <name type="synonym">mda66</name>
    <name type="ordered locus">HI_0648</name>
</gene>
<sequence>MNILLLDGGKAFGHSHGELNHTLHKKAKEVLTALGHNVKETVIDAGYDVEAEIEKFLWMDAVIWQMPSWWMHEPWTVKKYIDEVLTNGHGKLYHSDGRHSVNPTEGYGTGGLLQGKKHMLSLTWNAPIEAFTREGDFFEGKGVDVLYMHFHKLNEFLGLTRLPTFLCNDVVKSPQVEQYLADYQAHLEKVFG</sequence>
<keyword id="KW-0963">Cytoplasm</keyword>
<keyword id="KW-0274">FAD</keyword>
<keyword id="KW-0285">Flavoprotein</keyword>
<keyword id="KW-0560">Oxidoreductase</keyword>
<keyword id="KW-1185">Reference proteome</keyword>